<organism>
    <name type="scientific">Bacillus subtilis (strain 168)</name>
    <dbReference type="NCBI Taxonomy" id="224308"/>
    <lineage>
        <taxon>Bacteria</taxon>
        <taxon>Bacillati</taxon>
        <taxon>Bacillota</taxon>
        <taxon>Bacilli</taxon>
        <taxon>Bacillales</taxon>
        <taxon>Bacillaceae</taxon>
        <taxon>Bacillus</taxon>
    </lineage>
</organism>
<name>YVEF_BACSU</name>
<gene>
    <name type="primary">yveF</name>
    <name type="ordered locus">BSU34420</name>
</gene>
<accession>O07004</accession>
<protein>
    <recommendedName>
        <fullName>Uncharacterized protein YveF</fullName>
    </recommendedName>
</protein>
<sequence>MKKPVLKPFASLEIKVDPPITIGETSLGLR</sequence>
<feature type="chain" id="PRO_0000049940" description="Uncharacterized protein YveF">
    <location>
        <begin position="1"/>
        <end position="30"/>
    </location>
</feature>
<keyword id="KW-1185">Reference proteome</keyword>
<proteinExistence type="predicted"/>
<reference key="1">
    <citation type="submission" date="1997-04" db="EMBL/GenBank/DDBJ databases">
        <authorList>
            <person name="Denizot F."/>
        </authorList>
    </citation>
    <scope>NUCLEOTIDE SEQUENCE [GENOMIC DNA]</scope>
    <source>
        <strain>168</strain>
    </source>
</reference>
<reference key="2">
    <citation type="journal article" date="1997" name="Nature">
        <title>The complete genome sequence of the Gram-positive bacterium Bacillus subtilis.</title>
        <authorList>
            <person name="Kunst F."/>
            <person name="Ogasawara N."/>
            <person name="Moszer I."/>
            <person name="Albertini A.M."/>
            <person name="Alloni G."/>
            <person name="Azevedo V."/>
            <person name="Bertero M.G."/>
            <person name="Bessieres P."/>
            <person name="Bolotin A."/>
            <person name="Borchert S."/>
            <person name="Borriss R."/>
            <person name="Boursier L."/>
            <person name="Brans A."/>
            <person name="Braun M."/>
            <person name="Brignell S.C."/>
            <person name="Bron S."/>
            <person name="Brouillet S."/>
            <person name="Bruschi C.V."/>
            <person name="Caldwell B."/>
            <person name="Capuano V."/>
            <person name="Carter N.M."/>
            <person name="Choi S.-K."/>
            <person name="Codani J.-J."/>
            <person name="Connerton I.F."/>
            <person name="Cummings N.J."/>
            <person name="Daniel R.A."/>
            <person name="Denizot F."/>
            <person name="Devine K.M."/>
            <person name="Duesterhoeft A."/>
            <person name="Ehrlich S.D."/>
            <person name="Emmerson P.T."/>
            <person name="Entian K.-D."/>
            <person name="Errington J."/>
            <person name="Fabret C."/>
            <person name="Ferrari E."/>
            <person name="Foulger D."/>
            <person name="Fritz C."/>
            <person name="Fujita M."/>
            <person name="Fujita Y."/>
            <person name="Fuma S."/>
            <person name="Galizzi A."/>
            <person name="Galleron N."/>
            <person name="Ghim S.-Y."/>
            <person name="Glaser P."/>
            <person name="Goffeau A."/>
            <person name="Golightly E.J."/>
            <person name="Grandi G."/>
            <person name="Guiseppi G."/>
            <person name="Guy B.J."/>
            <person name="Haga K."/>
            <person name="Haiech J."/>
            <person name="Harwood C.R."/>
            <person name="Henaut A."/>
            <person name="Hilbert H."/>
            <person name="Holsappel S."/>
            <person name="Hosono S."/>
            <person name="Hullo M.-F."/>
            <person name="Itaya M."/>
            <person name="Jones L.-M."/>
            <person name="Joris B."/>
            <person name="Karamata D."/>
            <person name="Kasahara Y."/>
            <person name="Klaerr-Blanchard M."/>
            <person name="Klein C."/>
            <person name="Kobayashi Y."/>
            <person name="Koetter P."/>
            <person name="Koningstein G."/>
            <person name="Krogh S."/>
            <person name="Kumano M."/>
            <person name="Kurita K."/>
            <person name="Lapidus A."/>
            <person name="Lardinois S."/>
            <person name="Lauber J."/>
            <person name="Lazarevic V."/>
            <person name="Lee S.-M."/>
            <person name="Levine A."/>
            <person name="Liu H."/>
            <person name="Masuda S."/>
            <person name="Mauel C."/>
            <person name="Medigue C."/>
            <person name="Medina N."/>
            <person name="Mellado R.P."/>
            <person name="Mizuno M."/>
            <person name="Moestl D."/>
            <person name="Nakai S."/>
            <person name="Noback M."/>
            <person name="Noone D."/>
            <person name="O'Reilly M."/>
            <person name="Ogawa K."/>
            <person name="Ogiwara A."/>
            <person name="Oudega B."/>
            <person name="Park S.-H."/>
            <person name="Parro V."/>
            <person name="Pohl T.M."/>
            <person name="Portetelle D."/>
            <person name="Porwollik S."/>
            <person name="Prescott A.M."/>
            <person name="Presecan E."/>
            <person name="Pujic P."/>
            <person name="Purnelle B."/>
            <person name="Rapoport G."/>
            <person name="Rey M."/>
            <person name="Reynolds S."/>
            <person name="Rieger M."/>
            <person name="Rivolta C."/>
            <person name="Rocha E."/>
            <person name="Roche B."/>
            <person name="Rose M."/>
            <person name="Sadaie Y."/>
            <person name="Sato T."/>
            <person name="Scanlan E."/>
            <person name="Schleich S."/>
            <person name="Schroeter R."/>
            <person name="Scoffone F."/>
            <person name="Sekiguchi J."/>
            <person name="Sekowska A."/>
            <person name="Seror S.J."/>
            <person name="Serror P."/>
            <person name="Shin B.-S."/>
            <person name="Soldo B."/>
            <person name="Sorokin A."/>
            <person name="Tacconi E."/>
            <person name="Takagi T."/>
            <person name="Takahashi H."/>
            <person name="Takemaru K."/>
            <person name="Takeuchi M."/>
            <person name="Tamakoshi A."/>
            <person name="Tanaka T."/>
            <person name="Terpstra P."/>
            <person name="Tognoni A."/>
            <person name="Tosato V."/>
            <person name="Uchiyama S."/>
            <person name="Vandenbol M."/>
            <person name="Vannier F."/>
            <person name="Vassarotti A."/>
            <person name="Viari A."/>
            <person name="Wambutt R."/>
            <person name="Wedler E."/>
            <person name="Wedler H."/>
            <person name="Weitzenegger T."/>
            <person name="Winters P."/>
            <person name="Wipat A."/>
            <person name="Yamamoto H."/>
            <person name="Yamane K."/>
            <person name="Yasumoto K."/>
            <person name="Yata K."/>
            <person name="Yoshida K."/>
            <person name="Yoshikawa H.-F."/>
            <person name="Zumstein E."/>
            <person name="Yoshikawa H."/>
            <person name="Danchin A."/>
        </authorList>
    </citation>
    <scope>NUCLEOTIDE SEQUENCE [LARGE SCALE GENOMIC DNA]</scope>
    <source>
        <strain>168</strain>
    </source>
</reference>
<dbReference type="EMBL" id="Z94043">
    <property type="protein sequence ID" value="CAB08018.1"/>
    <property type="molecule type" value="Genomic_DNA"/>
</dbReference>
<dbReference type="EMBL" id="AL009126">
    <property type="protein sequence ID" value="CAB15447.1"/>
    <property type="molecule type" value="Genomic_DNA"/>
</dbReference>
<dbReference type="PIR" id="F70035">
    <property type="entry name" value="F70035"/>
</dbReference>
<dbReference type="RefSeq" id="NP_391322.1">
    <property type="nucleotide sequence ID" value="NC_000964.3"/>
</dbReference>
<dbReference type="SMR" id="O07004"/>
<dbReference type="FunCoup" id="O07004">
    <property type="interactions" value="68"/>
</dbReference>
<dbReference type="STRING" id="224308.BSU34420"/>
<dbReference type="PaxDb" id="224308-BSU34420"/>
<dbReference type="KEGG" id="bsu:BSU34420"/>
<dbReference type="PATRIC" id="fig|224308.43.peg.3606"/>
<dbReference type="InParanoid" id="O07004"/>
<dbReference type="BioCyc" id="BSUB:BSU34420-MONOMER"/>
<dbReference type="Proteomes" id="UP000001570">
    <property type="component" value="Chromosome"/>
</dbReference>